<name>RBMS1_BOVIN</name>
<gene>
    <name type="primary">RBMS1</name>
</gene>
<feature type="chain" id="PRO_0000287719" description="RNA-binding motif, single-stranded-interacting protein 1">
    <location>
        <begin position="1"/>
        <end position="403"/>
    </location>
</feature>
<feature type="domain" description="RRM 1" evidence="3">
    <location>
        <begin position="62"/>
        <end position="135"/>
    </location>
</feature>
<feature type="domain" description="RRM 2" evidence="3">
    <location>
        <begin position="141"/>
        <end position="226"/>
    </location>
</feature>
<feature type="region of interest" description="Disordered" evidence="4">
    <location>
        <begin position="30"/>
        <end position="56"/>
    </location>
</feature>
<feature type="compositionally biased region" description="Low complexity" evidence="4">
    <location>
        <begin position="40"/>
        <end position="54"/>
    </location>
</feature>
<feature type="modified residue" description="Phosphothreonine" evidence="2">
    <location>
        <position position="208"/>
    </location>
</feature>
<keyword id="KW-0235">DNA replication</keyword>
<keyword id="KW-0238">DNA-binding</keyword>
<keyword id="KW-0539">Nucleus</keyword>
<keyword id="KW-0597">Phosphoprotein</keyword>
<keyword id="KW-1185">Reference proteome</keyword>
<keyword id="KW-0677">Repeat</keyword>
<keyword id="KW-0694">RNA-binding</keyword>
<accession>Q3ZBP3</accession>
<reference key="1">
    <citation type="submission" date="2005-08" db="EMBL/GenBank/DDBJ databases">
        <authorList>
            <consortium name="NIH - Mammalian Gene Collection (MGC) project"/>
        </authorList>
    </citation>
    <scope>NUCLEOTIDE SEQUENCE [LARGE SCALE MRNA]</scope>
    <source>
        <strain>Hereford</strain>
        <tissue>Heart ventricle</tissue>
    </source>
</reference>
<dbReference type="EMBL" id="BC103186">
    <property type="protein sequence ID" value="AAI03187.1"/>
    <property type="molecule type" value="mRNA"/>
</dbReference>
<dbReference type="RefSeq" id="NP_001030438.1">
    <property type="nucleotide sequence ID" value="NM_001035361.1"/>
</dbReference>
<dbReference type="SMR" id="Q3ZBP3"/>
<dbReference type="FunCoup" id="Q3ZBP3">
    <property type="interactions" value="721"/>
</dbReference>
<dbReference type="STRING" id="9913.ENSBTAP00000006826"/>
<dbReference type="PaxDb" id="9913-ENSBTAP00000006826"/>
<dbReference type="GeneID" id="526135"/>
<dbReference type="KEGG" id="bta:526135"/>
<dbReference type="CTD" id="5937"/>
<dbReference type="eggNOG" id="KOG4733">
    <property type="taxonomic scope" value="Eukaryota"/>
</dbReference>
<dbReference type="HOGENOM" id="CLU_016278_2_0_1"/>
<dbReference type="InParanoid" id="Q3ZBP3"/>
<dbReference type="OrthoDB" id="271725at2759"/>
<dbReference type="TreeFam" id="TF314644"/>
<dbReference type="Proteomes" id="UP000009136">
    <property type="component" value="Unplaced"/>
</dbReference>
<dbReference type="GO" id="GO:0005829">
    <property type="term" value="C:cytosol"/>
    <property type="evidence" value="ECO:0000318"/>
    <property type="project" value="GO_Central"/>
</dbReference>
<dbReference type="GO" id="GO:0005634">
    <property type="term" value="C:nucleus"/>
    <property type="evidence" value="ECO:0000318"/>
    <property type="project" value="GO_Central"/>
</dbReference>
<dbReference type="GO" id="GO:1990904">
    <property type="term" value="C:ribonucleoprotein complex"/>
    <property type="evidence" value="ECO:0000318"/>
    <property type="project" value="GO_Central"/>
</dbReference>
<dbReference type="GO" id="GO:0003677">
    <property type="term" value="F:DNA binding"/>
    <property type="evidence" value="ECO:0007669"/>
    <property type="project" value="UniProtKB-KW"/>
</dbReference>
<dbReference type="GO" id="GO:0003730">
    <property type="term" value="F:mRNA 3'-UTR binding"/>
    <property type="evidence" value="ECO:0000318"/>
    <property type="project" value="GO_Central"/>
</dbReference>
<dbReference type="GO" id="GO:0008143">
    <property type="term" value="F:poly(A) binding"/>
    <property type="evidence" value="ECO:0000318"/>
    <property type="project" value="GO_Central"/>
</dbReference>
<dbReference type="GO" id="GO:0008266">
    <property type="term" value="F:poly(U) RNA binding"/>
    <property type="evidence" value="ECO:0000318"/>
    <property type="project" value="GO_Central"/>
</dbReference>
<dbReference type="GO" id="GO:0006260">
    <property type="term" value="P:DNA replication"/>
    <property type="evidence" value="ECO:0007669"/>
    <property type="project" value="UniProtKB-KW"/>
</dbReference>
<dbReference type="CDD" id="cd12470">
    <property type="entry name" value="RRM1_MSSP1"/>
    <property type="match status" value="1"/>
</dbReference>
<dbReference type="CDD" id="cd12473">
    <property type="entry name" value="RRM2_MSSP1"/>
    <property type="match status" value="1"/>
</dbReference>
<dbReference type="FunFam" id="3.30.70.330:FF:000012">
    <property type="entry name" value="RNA-binding motif, single-stranded-interacting protein 3 isoform 1"/>
    <property type="match status" value="1"/>
</dbReference>
<dbReference type="FunFam" id="3.30.70.330:FF:000014">
    <property type="entry name" value="RNA-binding motif, single-stranded-interacting protein 3 isoform 1"/>
    <property type="match status" value="1"/>
</dbReference>
<dbReference type="Gene3D" id="3.30.70.330">
    <property type="match status" value="2"/>
</dbReference>
<dbReference type="InterPro" id="IPR002343">
    <property type="entry name" value="Hud_Sxl_RNA"/>
</dbReference>
<dbReference type="InterPro" id="IPR034404">
    <property type="entry name" value="MSSP1_RRM1"/>
</dbReference>
<dbReference type="InterPro" id="IPR012677">
    <property type="entry name" value="Nucleotide-bd_a/b_plait_sf"/>
</dbReference>
<dbReference type="InterPro" id="IPR035979">
    <property type="entry name" value="RBD_domain_sf"/>
</dbReference>
<dbReference type="InterPro" id="IPR000504">
    <property type="entry name" value="RRM_dom"/>
</dbReference>
<dbReference type="PANTHER" id="PTHR24012">
    <property type="entry name" value="RNA BINDING PROTEIN"/>
    <property type="match status" value="1"/>
</dbReference>
<dbReference type="Pfam" id="PF00076">
    <property type="entry name" value="RRM_1"/>
    <property type="match status" value="2"/>
</dbReference>
<dbReference type="PRINTS" id="PR00961">
    <property type="entry name" value="HUDSXLRNA"/>
</dbReference>
<dbReference type="SMART" id="SM00360">
    <property type="entry name" value="RRM"/>
    <property type="match status" value="2"/>
</dbReference>
<dbReference type="SUPFAM" id="SSF54928">
    <property type="entry name" value="RNA-binding domain, RBD"/>
    <property type="match status" value="2"/>
</dbReference>
<dbReference type="PROSITE" id="PS50102">
    <property type="entry name" value="RRM"/>
    <property type="match status" value="2"/>
</dbReference>
<organism>
    <name type="scientific">Bos taurus</name>
    <name type="common">Bovine</name>
    <dbReference type="NCBI Taxonomy" id="9913"/>
    <lineage>
        <taxon>Eukaryota</taxon>
        <taxon>Metazoa</taxon>
        <taxon>Chordata</taxon>
        <taxon>Craniata</taxon>
        <taxon>Vertebrata</taxon>
        <taxon>Euteleostomi</taxon>
        <taxon>Mammalia</taxon>
        <taxon>Eutheria</taxon>
        <taxon>Laurasiatheria</taxon>
        <taxon>Artiodactyla</taxon>
        <taxon>Ruminantia</taxon>
        <taxon>Pecora</taxon>
        <taxon>Bovidae</taxon>
        <taxon>Bovinae</taxon>
        <taxon>Bos</taxon>
    </lineage>
</organism>
<comment type="function">
    <text evidence="1">Single-stranded DNA binding protein that interacts with the region upstream of the C-myc gene. Binds specifically to the DNA sequence motif 5'-[AT]CT[AT][AT]T-3'. Probably has a role in DNA replication (By similarity).</text>
</comment>
<comment type="subcellular location">
    <subcellularLocation>
        <location evidence="1">Nucleus</location>
    </subcellularLocation>
</comment>
<evidence type="ECO:0000250" key="1"/>
<evidence type="ECO:0000250" key="2">
    <source>
        <dbReference type="UniProtKB" id="P29558"/>
    </source>
</evidence>
<evidence type="ECO:0000255" key="3">
    <source>
        <dbReference type="PROSITE-ProRule" id="PRU00176"/>
    </source>
</evidence>
<evidence type="ECO:0000256" key="4">
    <source>
        <dbReference type="SAM" id="MobiDB-lite"/>
    </source>
</evidence>
<sequence length="403" mass="44112">MGKVWKQQMYPQYATYYYPQYLQAKQSLVPAHPMAPPSPSTTSSNNNSSSSSNSGWDQLSKTNLYIRGLPPNTTDQDLVKLCQPYGKIVSTKAILDKTTNKCKGYGFVDFDSPAAAQKAVSALKASGVQAQMAKQQEQDPTNLYISNLPLSMDEQELENMLKPFGQVISTRILRDSSGTSRGVGFARMESTEKCEAVIGHFNGKFIKTPPGVSAPTEPLLCKFADGGQKKRQNPNKYIPNGRPWHREGEAGMTLTYDPTTAAIQNGFYPSPYSIATNRMITQTSITPYIASPVSAYQVQSPSWMQPQPYILQHPGAVLTPSMEHTMSLQPASMISPLAQQMSHLSLGSTGTYMPATSAMQGAYLPQYTHVQTAAVPVEEASGQQQVTVETSNDHSPYTFQPNK</sequence>
<protein>
    <recommendedName>
        <fullName>RNA-binding motif, single-stranded-interacting protein 1</fullName>
    </recommendedName>
</protein>
<proteinExistence type="evidence at transcript level"/>